<accession>A3N2F5</accession>
<reference key="1">
    <citation type="journal article" date="2008" name="J. Bacteriol.">
        <title>The complete genome sequence of Actinobacillus pleuropneumoniae L20 (serotype 5b).</title>
        <authorList>
            <person name="Foote S.J."/>
            <person name="Bosse J.T."/>
            <person name="Bouevitch A.B."/>
            <person name="Langford P.R."/>
            <person name="Young N.M."/>
            <person name="Nash J.H.E."/>
        </authorList>
    </citation>
    <scope>NUCLEOTIDE SEQUENCE [LARGE SCALE GENOMIC DNA]</scope>
    <source>
        <strain>L20</strain>
    </source>
</reference>
<gene>
    <name evidence="1" type="primary">tig</name>
    <name type="ordered locus">APL_1507</name>
</gene>
<sequence>MSISIETLEGLQRRVTITVAADKIEAAYKEQLKGYAKNARVDGFRKGKVPHAIIEQRFGLAARQDVLSDEMQRAFFDAVIAEKINLAGRPTFTPNNYQPGQEFSFTATFEVFPEVELKGLENIEVEKPVVEITEADLDKMIDVLRKQQATWAESQAAAQAEDRVVIDFVGSVDGEEFEGGKATDFTLAMGQDRMIPGFEEGIVGHKAGEQFDIDVTFPEEYHAENLKGKAAKFAITLKKVENIVLPELTEEFVKKFGSAKTVEDLRAEIKKNMQRELKNAVTARVKNQVINGLIAQNEIEVPAAAVAEEVDVLRRQAVQRFGGKPEMAAQLPAELFEADAKRRVQVGLLLSTVIGTNELKVDEKRVEETIAEIASAYEQPAEVVAHYAKNRQLTENIRNVVLEEQAVEVVLAKAKVTEKATSFDEVMAQQAQG</sequence>
<keyword id="KW-0131">Cell cycle</keyword>
<keyword id="KW-0132">Cell division</keyword>
<keyword id="KW-0143">Chaperone</keyword>
<keyword id="KW-0963">Cytoplasm</keyword>
<keyword id="KW-0413">Isomerase</keyword>
<keyword id="KW-1185">Reference proteome</keyword>
<keyword id="KW-0697">Rotamase</keyword>
<dbReference type="EC" id="5.2.1.8" evidence="1"/>
<dbReference type="EMBL" id="CP000569">
    <property type="protein sequence ID" value="ABN74591.1"/>
    <property type="molecule type" value="Genomic_DNA"/>
</dbReference>
<dbReference type="RefSeq" id="WP_009875211.1">
    <property type="nucleotide sequence ID" value="NC_009053.1"/>
</dbReference>
<dbReference type="SMR" id="A3N2F5"/>
<dbReference type="STRING" id="416269.APL_1507"/>
<dbReference type="EnsemblBacteria" id="ABN74591">
    <property type="protein sequence ID" value="ABN74591"/>
    <property type="gene ID" value="APL_1507"/>
</dbReference>
<dbReference type="KEGG" id="apl:APL_1507"/>
<dbReference type="PATRIC" id="fig|416269.6.peg.1568"/>
<dbReference type="eggNOG" id="COG0544">
    <property type="taxonomic scope" value="Bacteria"/>
</dbReference>
<dbReference type="HOGENOM" id="CLU_033058_2_0_6"/>
<dbReference type="Proteomes" id="UP000001432">
    <property type="component" value="Chromosome"/>
</dbReference>
<dbReference type="GO" id="GO:0005737">
    <property type="term" value="C:cytoplasm"/>
    <property type="evidence" value="ECO:0007669"/>
    <property type="project" value="UniProtKB-SubCell"/>
</dbReference>
<dbReference type="GO" id="GO:0003755">
    <property type="term" value="F:peptidyl-prolyl cis-trans isomerase activity"/>
    <property type="evidence" value="ECO:0007669"/>
    <property type="project" value="UniProtKB-UniRule"/>
</dbReference>
<dbReference type="GO" id="GO:0044183">
    <property type="term" value="F:protein folding chaperone"/>
    <property type="evidence" value="ECO:0007669"/>
    <property type="project" value="TreeGrafter"/>
</dbReference>
<dbReference type="GO" id="GO:0043022">
    <property type="term" value="F:ribosome binding"/>
    <property type="evidence" value="ECO:0007669"/>
    <property type="project" value="TreeGrafter"/>
</dbReference>
<dbReference type="GO" id="GO:0051083">
    <property type="term" value="P:'de novo' cotranslational protein folding"/>
    <property type="evidence" value="ECO:0007669"/>
    <property type="project" value="TreeGrafter"/>
</dbReference>
<dbReference type="GO" id="GO:0051301">
    <property type="term" value="P:cell division"/>
    <property type="evidence" value="ECO:0007669"/>
    <property type="project" value="UniProtKB-KW"/>
</dbReference>
<dbReference type="GO" id="GO:0061077">
    <property type="term" value="P:chaperone-mediated protein folding"/>
    <property type="evidence" value="ECO:0007669"/>
    <property type="project" value="TreeGrafter"/>
</dbReference>
<dbReference type="GO" id="GO:0015031">
    <property type="term" value="P:protein transport"/>
    <property type="evidence" value="ECO:0007669"/>
    <property type="project" value="UniProtKB-UniRule"/>
</dbReference>
<dbReference type="GO" id="GO:0043335">
    <property type="term" value="P:protein unfolding"/>
    <property type="evidence" value="ECO:0007669"/>
    <property type="project" value="TreeGrafter"/>
</dbReference>
<dbReference type="FunFam" id="3.10.50.40:FF:000001">
    <property type="entry name" value="Trigger factor"/>
    <property type="match status" value="1"/>
</dbReference>
<dbReference type="Gene3D" id="3.10.50.40">
    <property type="match status" value="1"/>
</dbReference>
<dbReference type="Gene3D" id="3.30.70.1050">
    <property type="entry name" value="Trigger factor ribosome-binding domain"/>
    <property type="match status" value="1"/>
</dbReference>
<dbReference type="Gene3D" id="1.10.3120.10">
    <property type="entry name" value="Trigger factor, C-terminal domain"/>
    <property type="match status" value="1"/>
</dbReference>
<dbReference type="HAMAP" id="MF_00303">
    <property type="entry name" value="Trigger_factor_Tig"/>
    <property type="match status" value="1"/>
</dbReference>
<dbReference type="InterPro" id="IPR046357">
    <property type="entry name" value="PPIase_dom_sf"/>
</dbReference>
<dbReference type="InterPro" id="IPR001179">
    <property type="entry name" value="PPIase_FKBP_dom"/>
</dbReference>
<dbReference type="InterPro" id="IPR005215">
    <property type="entry name" value="Trig_fac"/>
</dbReference>
<dbReference type="InterPro" id="IPR008880">
    <property type="entry name" value="Trigger_fac_C"/>
</dbReference>
<dbReference type="InterPro" id="IPR037041">
    <property type="entry name" value="Trigger_fac_C_sf"/>
</dbReference>
<dbReference type="InterPro" id="IPR008881">
    <property type="entry name" value="Trigger_fac_ribosome-bd_bac"/>
</dbReference>
<dbReference type="InterPro" id="IPR036611">
    <property type="entry name" value="Trigger_fac_ribosome-bd_sf"/>
</dbReference>
<dbReference type="InterPro" id="IPR027304">
    <property type="entry name" value="Trigger_fact/SurA_dom_sf"/>
</dbReference>
<dbReference type="NCBIfam" id="TIGR00115">
    <property type="entry name" value="tig"/>
    <property type="match status" value="1"/>
</dbReference>
<dbReference type="PANTHER" id="PTHR30560">
    <property type="entry name" value="TRIGGER FACTOR CHAPERONE AND PEPTIDYL-PROLYL CIS/TRANS ISOMERASE"/>
    <property type="match status" value="1"/>
</dbReference>
<dbReference type="PANTHER" id="PTHR30560:SF3">
    <property type="entry name" value="TRIGGER FACTOR-LIKE PROTEIN TIG, CHLOROPLASTIC"/>
    <property type="match status" value="1"/>
</dbReference>
<dbReference type="Pfam" id="PF00254">
    <property type="entry name" value="FKBP_C"/>
    <property type="match status" value="1"/>
</dbReference>
<dbReference type="Pfam" id="PF05698">
    <property type="entry name" value="Trigger_C"/>
    <property type="match status" value="1"/>
</dbReference>
<dbReference type="Pfam" id="PF05697">
    <property type="entry name" value="Trigger_N"/>
    <property type="match status" value="1"/>
</dbReference>
<dbReference type="PIRSF" id="PIRSF003095">
    <property type="entry name" value="Trigger_factor"/>
    <property type="match status" value="1"/>
</dbReference>
<dbReference type="SUPFAM" id="SSF54534">
    <property type="entry name" value="FKBP-like"/>
    <property type="match status" value="1"/>
</dbReference>
<dbReference type="SUPFAM" id="SSF109998">
    <property type="entry name" value="Triger factor/SurA peptide-binding domain-like"/>
    <property type="match status" value="1"/>
</dbReference>
<dbReference type="SUPFAM" id="SSF102735">
    <property type="entry name" value="Trigger factor ribosome-binding domain"/>
    <property type="match status" value="1"/>
</dbReference>
<dbReference type="PROSITE" id="PS50059">
    <property type="entry name" value="FKBP_PPIASE"/>
    <property type="match status" value="1"/>
</dbReference>
<proteinExistence type="inferred from homology"/>
<name>TIG_ACTP2</name>
<organism>
    <name type="scientific">Actinobacillus pleuropneumoniae serotype 5b (strain L20)</name>
    <dbReference type="NCBI Taxonomy" id="416269"/>
    <lineage>
        <taxon>Bacteria</taxon>
        <taxon>Pseudomonadati</taxon>
        <taxon>Pseudomonadota</taxon>
        <taxon>Gammaproteobacteria</taxon>
        <taxon>Pasteurellales</taxon>
        <taxon>Pasteurellaceae</taxon>
        <taxon>Actinobacillus</taxon>
    </lineage>
</organism>
<comment type="function">
    <text evidence="1">Involved in protein export. Acts as a chaperone by maintaining the newly synthesized protein in an open conformation. Functions as a peptidyl-prolyl cis-trans isomerase.</text>
</comment>
<comment type="catalytic activity">
    <reaction evidence="1">
        <text>[protein]-peptidylproline (omega=180) = [protein]-peptidylproline (omega=0)</text>
        <dbReference type="Rhea" id="RHEA:16237"/>
        <dbReference type="Rhea" id="RHEA-COMP:10747"/>
        <dbReference type="Rhea" id="RHEA-COMP:10748"/>
        <dbReference type="ChEBI" id="CHEBI:83833"/>
        <dbReference type="ChEBI" id="CHEBI:83834"/>
        <dbReference type="EC" id="5.2.1.8"/>
    </reaction>
</comment>
<comment type="subcellular location">
    <subcellularLocation>
        <location>Cytoplasm</location>
    </subcellularLocation>
    <text evidence="1">About half TF is bound to the ribosome near the polypeptide exit tunnel while the other half is free in the cytoplasm.</text>
</comment>
<comment type="domain">
    <text evidence="1">Consists of 3 domains; the N-terminus binds the ribosome, the middle domain has PPIase activity, while the C-terminus has intrinsic chaperone activity on its own.</text>
</comment>
<comment type="similarity">
    <text evidence="1">Belongs to the FKBP-type PPIase family. Tig subfamily.</text>
</comment>
<evidence type="ECO:0000255" key="1">
    <source>
        <dbReference type="HAMAP-Rule" id="MF_00303"/>
    </source>
</evidence>
<protein>
    <recommendedName>
        <fullName evidence="1">Trigger factor</fullName>
        <shortName evidence="1">TF</shortName>
        <ecNumber evidence="1">5.2.1.8</ecNumber>
    </recommendedName>
    <alternativeName>
        <fullName evidence="1">PPIase</fullName>
    </alternativeName>
</protein>
<feature type="chain" id="PRO_1000022638" description="Trigger factor">
    <location>
        <begin position="1"/>
        <end position="433"/>
    </location>
</feature>
<feature type="domain" description="PPIase FKBP-type" evidence="1">
    <location>
        <begin position="161"/>
        <end position="246"/>
    </location>
</feature>